<organism>
    <name type="scientific">Streptococcus equi subsp. zooepidemicus (strain H70)</name>
    <dbReference type="NCBI Taxonomy" id="553483"/>
    <lineage>
        <taxon>Bacteria</taxon>
        <taxon>Bacillati</taxon>
        <taxon>Bacillota</taxon>
        <taxon>Bacilli</taxon>
        <taxon>Lactobacillales</taxon>
        <taxon>Streptococcaceae</taxon>
        <taxon>Streptococcus</taxon>
    </lineage>
</organism>
<accession>C0MEE0</accession>
<protein>
    <recommendedName>
        <fullName evidence="1">Tyrosine--tRNA ligase</fullName>
        <ecNumber evidence="1">6.1.1.1</ecNumber>
    </recommendedName>
    <alternativeName>
        <fullName evidence="1">Tyrosyl-tRNA synthetase</fullName>
        <shortName evidence="1">TyrRS</shortName>
    </alternativeName>
</protein>
<name>SYY_STRS7</name>
<keyword id="KW-0030">Aminoacyl-tRNA synthetase</keyword>
<keyword id="KW-0067">ATP-binding</keyword>
<keyword id="KW-0963">Cytoplasm</keyword>
<keyword id="KW-0436">Ligase</keyword>
<keyword id="KW-0547">Nucleotide-binding</keyword>
<keyword id="KW-0648">Protein biosynthesis</keyword>
<keyword id="KW-0694">RNA-binding</keyword>
<evidence type="ECO:0000255" key="1">
    <source>
        <dbReference type="HAMAP-Rule" id="MF_02006"/>
    </source>
</evidence>
<reference key="1">
    <citation type="journal article" date="2009" name="PLoS Pathog.">
        <title>Genomic evidence for the evolution of Streptococcus equi: host restriction, increased virulence, and genetic exchange with human pathogens.</title>
        <authorList>
            <person name="Holden M.T.G."/>
            <person name="Heather Z."/>
            <person name="Paillot R."/>
            <person name="Steward K.F."/>
            <person name="Webb K."/>
            <person name="Ainslie F."/>
            <person name="Jourdan T."/>
            <person name="Bason N.C."/>
            <person name="Holroyd N.E."/>
            <person name="Mungall K."/>
            <person name="Quail M.A."/>
            <person name="Sanders M."/>
            <person name="Simmonds M."/>
            <person name="Willey D."/>
            <person name="Brooks K."/>
            <person name="Aanensen D.M."/>
            <person name="Spratt B.G."/>
            <person name="Jolley K.A."/>
            <person name="Maiden M.C.J."/>
            <person name="Kehoe M."/>
            <person name="Chanter N."/>
            <person name="Bentley S.D."/>
            <person name="Robinson C."/>
            <person name="Maskell D.J."/>
            <person name="Parkhill J."/>
            <person name="Waller A.S."/>
        </authorList>
    </citation>
    <scope>NUCLEOTIDE SEQUENCE [LARGE SCALE GENOMIC DNA]</scope>
    <source>
        <strain>H70</strain>
    </source>
</reference>
<dbReference type="EC" id="6.1.1.1" evidence="1"/>
<dbReference type="EMBL" id="FM204884">
    <property type="protein sequence ID" value="CAW97715.1"/>
    <property type="molecule type" value="Genomic_DNA"/>
</dbReference>
<dbReference type="SMR" id="C0MEE0"/>
<dbReference type="KEGG" id="seq:SZO_00900"/>
<dbReference type="PATRIC" id="fig|40041.11.peg.88"/>
<dbReference type="eggNOG" id="COG0162">
    <property type="taxonomic scope" value="Bacteria"/>
</dbReference>
<dbReference type="HOGENOM" id="CLU_024003_0_3_9"/>
<dbReference type="Proteomes" id="UP000001368">
    <property type="component" value="Chromosome"/>
</dbReference>
<dbReference type="GO" id="GO:0005829">
    <property type="term" value="C:cytosol"/>
    <property type="evidence" value="ECO:0007669"/>
    <property type="project" value="TreeGrafter"/>
</dbReference>
<dbReference type="GO" id="GO:0005524">
    <property type="term" value="F:ATP binding"/>
    <property type="evidence" value="ECO:0007669"/>
    <property type="project" value="UniProtKB-UniRule"/>
</dbReference>
<dbReference type="GO" id="GO:0003723">
    <property type="term" value="F:RNA binding"/>
    <property type="evidence" value="ECO:0007669"/>
    <property type="project" value="UniProtKB-KW"/>
</dbReference>
<dbReference type="GO" id="GO:0004831">
    <property type="term" value="F:tyrosine-tRNA ligase activity"/>
    <property type="evidence" value="ECO:0007669"/>
    <property type="project" value="UniProtKB-UniRule"/>
</dbReference>
<dbReference type="GO" id="GO:0006437">
    <property type="term" value="P:tyrosyl-tRNA aminoacylation"/>
    <property type="evidence" value="ECO:0007669"/>
    <property type="project" value="UniProtKB-UniRule"/>
</dbReference>
<dbReference type="CDD" id="cd00165">
    <property type="entry name" value="S4"/>
    <property type="match status" value="1"/>
</dbReference>
<dbReference type="CDD" id="cd00805">
    <property type="entry name" value="TyrRS_core"/>
    <property type="match status" value="1"/>
</dbReference>
<dbReference type="FunFam" id="1.10.240.10:FF:000001">
    <property type="entry name" value="Tyrosine--tRNA ligase"/>
    <property type="match status" value="1"/>
</dbReference>
<dbReference type="FunFam" id="3.40.50.620:FF:000008">
    <property type="entry name" value="Tyrosine--tRNA ligase"/>
    <property type="match status" value="1"/>
</dbReference>
<dbReference type="Gene3D" id="3.40.50.620">
    <property type="entry name" value="HUPs"/>
    <property type="match status" value="1"/>
</dbReference>
<dbReference type="Gene3D" id="3.10.290.10">
    <property type="entry name" value="RNA-binding S4 domain"/>
    <property type="match status" value="1"/>
</dbReference>
<dbReference type="Gene3D" id="1.10.240.10">
    <property type="entry name" value="Tyrosyl-Transfer RNA Synthetase"/>
    <property type="match status" value="1"/>
</dbReference>
<dbReference type="HAMAP" id="MF_02006">
    <property type="entry name" value="Tyr_tRNA_synth_type1"/>
    <property type="match status" value="1"/>
</dbReference>
<dbReference type="InterPro" id="IPR001412">
    <property type="entry name" value="aa-tRNA-synth_I_CS"/>
</dbReference>
<dbReference type="InterPro" id="IPR002305">
    <property type="entry name" value="aa-tRNA-synth_Ic"/>
</dbReference>
<dbReference type="InterPro" id="IPR014729">
    <property type="entry name" value="Rossmann-like_a/b/a_fold"/>
</dbReference>
<dbReference type="InterPro" id="IPR036986">
    <property type="entry name" value="S4_RNA-bd_sf"/>
</dbReference>
<dbReference type="InterPro" id="IPR054608">
    <property type="entry name" value="SYY-like_C"/>
</dbReference>
<dbReference type="InterPro" id="IPR002307">
    <property type="entry name" value="Tyr-tRNA-ligase"/>
</dbReference>
<dbReference type="InterPro" id="IPR024088">
    <property type="entry name" value="Tyr-tRNA-ligase_bac-type"/>
</dbReference>
<dbReference type="InterPro" id="IPR024107">
    <property type="entry name" value="Tyr-tRNA-ligase_bac_1"/>
</dbReference>
<dbReference type="NCBIfam" id="TIGR00234">
    <property type="entry name" value="tyrS"/>
    <property type="match status" value="1"/>
</dbReference>
<dbReference type="PANTHER" id="PTHR11766:SF0">
    <property type="entry name" value="TYROSINE--TRNA LIGASE, MITOCHONDRIAL"/>
    <property type="match status" value="1"/>
</dbReference>
<dbReference type="PANTHER" id="PTHR11766">
    <property type="entry name" value="TYROSYL-TRNA SYNTHETASE"/>
    <property type="match status" value="1"/>
</dbReference>
<dbReference type="Pfam" id="PF22421">
    <property type="entry name" value="SYY_C-terminal"/>
    <property type="match status" value="1"/>
</dbReference>
<dbReference type="Pfam" id="PF00579">
    <property type="entry name" value="tRNA-synt_1b"/>
    <property type="match status" value="1"/>
</dbReference>
<dbReference type="PRINTS" id="PR01040">
    <property type="entry name" value="TRNASYNTHTYR"/>
</dbReference>
<dbReference type="SUPFAM" id="SSF55174">
    <property type="entry name" value="Alpha-L RNA-binding motif"/>
    <property type="match status" value="1"/>
</dbReference>
<dbReference type="SUPFAM" id="SSF52374">
    <property type="entry name" value="Nucleotidylyl transferase"/>
    <property type="match status" value="1"/>
</dbReference>
<dbReference type="PROSITE" id="PS00178">
    <property type="entry name" value="AA_TRNA_LIGASE_I"/>
    <property type="match status" value="1"/>
</dbReference>
<dbReference type="PROSITE" id="PS50889">
    <property type="entry name" value="S4"/>
    <property type="match status" value="1"/>
</dbReference>
<gene>
    <name evidence="1" type="primary">tyrS</name>
    <name type="ordered locus">SZO_00900</name>
</gene>
<proteinExistence type="inferred from homology"/>
<feature type="chain" id="PRO_1000216281" description="Tyrosine--tRNA ligase">
    <location>
        <begin position="1"/>
        <end position="418"/>
    </location>
</feature>
<feature type="domain" description="S4 RNA-binding" evidence="1">
    <location>
        <begin position="352"/>
        <end position="418"/>
    </location>
</feature>
<feature type="short sequence motif" description="'HIGH' region">
    <location>
        <begin position="39"/>
        <end position="48"/>
    </location>
</feature>
<feature type="short sequence motif" description="'KMSKS' region">
    <location>
        <begin position="229"/>
        <end position="233"/>
    </location>
</feature>
<feature type="binding site" evidence="1">
    <location>
        <position position="34"/>
    </location>
    <ligand>
        <name>L-tyrosine</name>
        <dbReference type="ChEBI" id="CHEBI:58315"/>
    </ligand>
</feature>
<feature type="binding site" evidence="1">
    <location>
        <position position="169"/>
    </location>
    <ligand>
        <name>L-tyrosine</name>
        <dbReference type="ChEBI" id="CHEBI:58315"/>
    </ligand>
</feature>
<feature type="binding site" evidence="1">
    <location>
        <position position="173"/>
    </location>
    <ligand>
        <name>L-tyrosine</name>
        <dbReference type="ChEBI" id="CHEBI:58315"/>
    </ligand>
</feature>
<feature type="binding site" evidence="1">
    <location>
        <position position="232"/>
    </location>
    <ligand>
        <name>ATP</name>
        <dbReference type="ChEBI" id="CHEBI:30616"/>
    </ligand>
</feature>
<comment type="function">
    <text evidence="1">Catalyzes the attachment of tyrosine to tRNA(Tyr) in a two-step reaction: tyrosine is first activated by ATP to form Tyr-AMP and then transferred to the acceptor end of tRNA(Tyr).</text>
</comment>
<comment type="catalytic activity">
    <reaction evidence="1">
        <text>tRNA(Tyr) + L-tyrosine + ATP = L-tyrosyl-tRNA(Tyr) + AMP + diphosphate + H(+)</text>
        <dbReference type="Rhea" id="RHEA:10220"/>
        <dbReference type="Rhea" id="RHEA-COMP:9706"/>
        <dbReference type="Rhea" id="RHEA-COMP:9707"/>
        <dbReference type="ChEBI" id="CHEBI:15378"/>
        <dbReference type="ChEBI" id="CHEBI:30616"/>
        <dbReference type="ChEBI" id="CHEBI:33019"/>
        <dbReference type="ChEBI" id="CHEBI:58315"/>
        <dbReference type="ChEBI" id="CHEBI:78442"/>
        <dbReference type="ChEBI" id="CHEBI:78536"/>
        <dbReference type="ChEBI" id="CHEBI:456215"/>
        <dbReference type="EC" id="6.1.1.1"/>
    </reaction>
</comment>
<comment type="subunit">
    <text evidence="1">Homodimer.</text>
</comment>
<comment type="subcellular location">
    <subcellularLocation>
        <location evidence="1">Cytoplasm</location>
    </subcellularLocation>
</comment>
<comment type="similarity">
    <text evidence="1">Belongs to the class-I aminoacyl-tRNA synthetase family. TyrS type 1 subfamily.</text>
</comment>
<sequence length="418" mass="47067">MNIFEELKARGLVFQTTDEEALVKALTEGQVSYYTGYDPTADSLHLGHLVAILTSRRLQLAGHKPYALVGGATGLIGDPSFKDAERILQTKETVLDWSQKIKEQLSCFLDFDNGENKAELVNNYDWFSQISFIDFLRDVGKHFTVNYMMSKDSVKKRIETGISYTEFAYQVMQGYDFYELNAKHNVTLQIGGSDQWGNMTAGTELLRKKADKTGHVMTVPLITDATGKKFGKSEGNAIWLDAKKTSPYEMYQFWLNVMDDDAVRFLKIFTFLSLDEIAAIEEQFNAARHERLAQKTLAREVVTLVHGEAAYQQALNITEQLFAGAIKNLSAAELKQGLSNVPNYQVQAEDSLNIVDMLVTAGISPSKRQAREDLQNGAIYLNGERLQNLDYSLSTADRIDNQLTVIRRGKKKYAVLTY</sequence>